<evidence type="ECO:0000250" key="1"/>
<evidence type="ECO:0000250" key="2">
    <source>
        <dbReference type="UniProtKB" id="P82385"/>
    </source>
</evidence>
<evidence type="ECO:0000305" key="3"/>
<evidence type="ECO:0007829" key="4">
    <source>
        <dbReference type="PDB" id="2HVB"/>
    </source>
</evidence>
<gene>
    <name type="primary">sorA</name>
    <name type="ordered locus">PH1083</name>
    <name type="ORF">PHCM016</name>
</gene>
<name>SOR_PYRHO</name>
<dbReference type="EC" id="1.15.1.2"/>
<dbReference type="EMBL" id="BA000001">
    <property type="protein sequence ID" value="BAA30182.1"/>
    <property type="status" value="ALT_INIT"/>
    <property type="molecule type" value="Genomic_DNA"/>
</dbReference>
<dbReference type="PIR" id="H71102">
    <property type="entry name" value="H71102"/>
</dbReference>
<dbReference type="RefSeq" id="WP_048053298.1">
    <property type="nucleotide sequence ID" value="NC_000961.1"/>
</dbReference>
<dbReference type="PDB" id="2HVB">
    <property type="method" value="X-ray"/>
    <property type="resolution" value="2.50 A"/>
    <property type="chains" value="A/B/C/D=1-115"/>
</dbReference>
<dbReference type="PDBsum" id="2HVB"/>
<dbReference type="SMR" id="O58810"/>
<dbReference type="STRING" id="70601.gene:9378042"/>
<dbReference type="EnsemblBacteria" id="BAA30182">
    <property type="protein sequence ID" value="BAA30182"/>
    <property type="gene ID" value="BAA30182"/>
</dbReference>
<dbReference type="GeneID" id="1443405"/>
<dbReference type="KEGG" id="pho:PH1083"/>
<dbReference type="eggNOG" id="arCOG02146">
    <property type="taxonomic scope" value="Archaea"/>
</dbReference>
<dbReference type="OrthoDB" id="30725at2157"/>
<dbReference type="BRENDA" id="1.15.1.2">
    <property type="organism ID" value="5244"/>
</dbReference>
<dbReference type="EvolutionaryTrace" id="O58810"/>
<dbReference type="Proteomes" id="UP000000752">
    <property type="component" value="Chromosome"/>
</dbReference>
<dbReference type="GO" id="GO:0005506">
    <property type="term" value="F:iron ion binding"/>
    <property type="evidence" value="ECO:0007669"/>
    <property type="project" value="InterPro"/>
</dbReference>
<dbReference type="GO" id="GO:0050605">
    <property type="term" value="F:superoxide reductase activity"/>
    <property type="evidence" value="ECO:0007669"/>
    <property type="project" value="UniProtKB-EC"/>
</dbReference>
<dbReference type="CDD" id="cd03172">
    <property type="entry name" value="SORL_classII"/>
    <property type="match status" value="1"/>
</dbReference>
<dbReference type="Gene3D" id="2.60.40.730">
    <property type="entry name" value="SOR catalytic domain"/>
    <property type="match status" value="1"/>
</dbReference>
<dbReference type="InterPro" id="IPR002742">
    <property type="entry name" value="Desulfoferrodoxin_Fe-bd_dom"/>
</dbReference>
<dbReference type="InterPro" id="IPR036073">
    <property type="entry name" value="Desulfoferrodoxin_Fe-bd_dom_sf"/>
</dbReference>
<dbReference type="InterPro" id="IPR051233">
    <property type="entry name" value="Desulfoferrodoxin_SOR"/>
</dbReference>
<dbReference type="NCBIfam" id="TIGR00332">
    <property type="entry name" value="neela_ferrous"/>
    <property type="match status" value="1"/>
</dbReference>
<dbReference type="PANTHER" id="PTHR36541">
    <property type="entry name" value="SUPEROXIDE REDUCTASE-RELATED"/>
    <property type="match status" value="1"/>
</dbReference>
<dbReference type="PANTHER" id="PTHR36541:SF1">
    <property type="entry name" value="SUPEROXIDE REDUCTASE-RELATED"/>
    <property type="match status" value="1"/>
</dbReference>
<dbReference type="Pfam" id="PF01880">
    <property type="entry name" value="Desulfoferrodox"/>
    <property type="match status" value="1"/>
</dbReference>
<dbReference type="SUPFAM" id="SSF49367">
    <property type="entry name" value="Superoxide reductase-like"/>
    <property type="match status" value="1"/>
</dbReference>
<organism>
    <name type="scientific">Pyrococcus horikoshii (strain ATCC 700860 / DSM 12428 / JCM 9974 / NBRC 100139 / OT-3)</name>
    <dbReference type="NCBI Taxonomy" id="70601"/>
    <lineage>
        <taxon>Archaea</taxon>
        <taxon>Methanobacteriati</taxon>
        <taxon>Methanobacteriota</taxon>
        <taxon>Thermococci</taxon>
        <taxon>Thermococcales</taxon>
        <taxon>Thermococcaceae</taxon>
        <taxon>Pyrococcus</taxon>
    </lineage>
</organism>
<feature type="chain" id="PRO_0000140874" description="Superoxide reductase">
    <location>
        <begin position="1"/>
        <end position="115"/>
    </location>
</feature>
<feature type="binding site" evidence="1">
    <location>
        <position position="14"/>
    </location>
    <ligand>
        <name>Fe cation</name>
        <dbReference type="ChEBI" id="CHEBI:24875"/>
    </ligand>
</feature>
<feature type="binding site" evidence="1">
    <location>
        <position position="16"/>
    </location>
    <ligand>
        <name>Fe cation</name>
        <dbReference type="ChEBI" id="CHEBI:24875"/>
    </ligand>
</feature>
<feature type="binding site" evidence="1">
    <location>
        <position position="41"/>
    </location>
    <ligand>
        <name>Fe cation</name>
        <dbReference type="ChEBI" id="CHEBI:24875"/>
    </ligand>
</feature>
<feature type="binding site" evidence="1">
    <location>
        <position position="47"/>
    </location>
    <ligand>
        <name>Fe cation</name>
        <dbReference type="ChEBI" id="CHEBI:24875"/>
    </ligand>
</feature>
<feature type="binding site" evidence="1">
    <location>
        <position position="102"/>
    </location>
    <ligand>
        <name>Fe cation</name>
        <dbReference type="ChEBI" id="CHEBI:24875"/>
    </ligand>
</feature>
<feature type="binding site" evidence="1">
    <location>
        <position position="105"/>
    </location>
    <ligand>
        <name>Fe cation</name>
        <dbReference type="ChEBI" id="CHEBI:24875"/>
    </ligand>
</feature>
<feature type="helix" evidence="4">
    <location>
        <begin position="3"/>
        <end position="5"/>
    </location>
</feature>
<feature type="strand" evidence="4">
    <location>
        <begin position="19"/>
        <end position="25"/>
    </location>
</feature>
<feature type="strand" evidence="4">
    <location>
        <begin position="28"/>
        <end position="39"/>
    </location>
</feature>
<feature type="strand" evidence="4">
    <location>
        <begin position="44"/>
        <end position="47"/>
    </location>
</feature>
<feature type="strand" evidence="4">
    <location>
        <begin position="49"/>
        <end position="58"/>
    </location>
</feature>
<feature type="strand" evidence="4">
    <location>
        <begin position="65"/>
        <end position="72"/>
    </location>
</feature>
<feature type="strand" evidence="4">
    <location>
        <begin position="75"/>
        <end position="89"/>
    </location>
</feature>
<feature type="strand" evidence="4">
    <location>
        <begin position="94"/>
        <end position="102"/>
    </location>
</feature>
<feature type="turn" evidence="4">
    <location>
        <begin position="103"/>
        <end position="105"/>
    </location>
</feature>
<feature type="strand" evidence="4">
    <location>
        <begin position="106"/>
        <end position="114"/>
    </location>
</feature>
<proteinExistence type="evidence at protein level"/>
<protein>
    <recommendedName>
        <fullName>Superoxide reductase</fullName>
        <shortName>SOR</shortName>
        <ecNumber>1.15.1.2</ecNumber>
    </recommendedName>
</protein>
<reference key="1">
    <citation type="journal article" date="1998" name="DNA Res.">
        <title>Complete sequence and gene organization of the genome of a hyper-thermophilic archaebacterium, Pyrococcus horikoshii OT3.</title>
        <authorList>
            <person name="Kawarabayasi Y."/>
            <person name="Sawada M."/>
            <person name="Horikawa H."/>
            <person name="Haikawa Y."/>
            <person name="Hino Y."/>
            <person name="Yamamoto S."/>
            <person name="Sekine M."/>
            <person name="Baba S."/>
            <person name="Kosugi H."/>
            <person name="Hosoyama A."/>
            <person name="Nagai Y."/>
            <person name="Sakai M."/>
            <person name="Ogura K."/>
            <person name="Otsuka R."/>
            <person name="Nakazawa H."/>
            <person name="Takamiya M."/>
            <person name="Ohfuku Y."/>
            <person name="Funahashi T."/>
            <person name="Tanaka T."/>
            <person name="Kudoh Y."/>
            <person name="Yamazaki J."/>
            <person name="Kushida N."/>
            <person name="Oguchi A."/>
            <person name="Aoki K."/>
            <person name="Yoshizawa T."/>
            <person name="Nakamura Y."/>
            <person name="Robb F.T."/>
            <person name="Horikoshi K."/>
            <person name="Masuchi Y."/>
            <person name="Shizuya H."/>
            <person name="Kikuchi H."/>
        </authorList>
    </citation>
    <scope>NUCLEOTIDE SEQUENCE [LARGE SCALE GENOMIC DNA]</scope>
    <source>
        <strain>ATCC 700860 / DSM 12428 / JCM 9974 / NBRC 100139 / OT-3</strain>
    </source>
</reference>
<comment type="function">
    <text evidence="1">Uses electrons from reduced NADP, by way of rubredoxin and an oxidoreductase, to catalyze the reduction of superoxide to hydrogen peroxide.</text>
</comment>
<comment type="catalytic activity">
    <reaction evidence="2">
        <text>reduced [rubredoxin] + superoxide + 2 H(+) = oxidized [rubredoxin] + H2O2</text>
        <dbReference type="Rhea" id="RHEA:21324"/>
        <dbReference type="Rhea" id="RHEA-COMP:10302"/>
        <dbReference type="Rhea" id="RHEA-COMP:10303"/>
        <dbReference type="ChEBI" id="CHEBI:15378"/>
        <dbReference type="ChEBI" id="CHEBI:16240"/>
        <dbReference type="ChEBI" id="CHEBI:18421"/>
        <dbReference type="ChEBI" id="CHEBI:29033"/>
        <dbReference type="ChEBI" id="CHEBI:29034"/>
        <dbReference type="EC" id="1.15.1.2"/>
    </reaction>
</comment>
<comment type="cofactor">
    <cofactor evidence="1">
        <name>Fe cation</name>
        <dbReference type="ChEBI" id="CHEBI:24875"/>
    </cofactor>
</comment>
<comment type="subunit">
    <text evidence="1">Homotetramer.</text>
</comment>
<comment type="similarity">
    <text evidence="3">Belongs to the desulfoferrodoxin family.</text>
</comment>
<comment type="sequence caution" evidence="3">
    <conflict type="erroneous initiation">
        <sequence resource="EMBL-CDS" id="BAA30182"/>
    </conflict>
</comment>
<keyword id="KW-0002">3D-structure</keyword>
<keyword id="KW-0249">Electron transport</keyword>
<keyword id="KW-0408">Iron</keyword>
<keyword id="KW-0479">Metal-binding</keyword>
<keyword id="KW-0560">Oxidoreductase</keyword>
<keyword id="KW-0813">Transport</keyword>
<accession>O58810</accession>
<sequence>MLKETIRSGDWKGEKHVPVIEYEREGDLVKVEVSVGKEIPHPNTPEHHIAWIELYFHPEGGQFPILVGRVEFTNHSDPLTEPRAVFFFKTSKKGKLYALSYCNIHGLWENEVQLE</sequence>